<gene>
    <name evidence="1" type="primary">gpsA</name>
    <name type="ordered locus">Bcep18194_A6182</name>
</gene>
<sequence length="332" mass="34058">MKVAVLGAGAWGTALAGHLAARHDTLLWARDAALIAGLQARHENSRYLDGIALPDALRYDADLGAALAHGAADDALCVIAAPVAGLRTLCHAMRDAGCVPAHVVWVCKGFEADTHLLPHQVIAAELPEQHSNGVLSGPSFAREVGQSLPVALTVASTSAECRERTLAAFHHGAMRIYTGDDVVGVEVGGAVKNVLAIATGIADGLGLGLNARAALITRGLAEMSRLGVALGGRAETFTGLTGLGDLILTATGDLSRNRTVGLQLAAGRTLNDILGALGHVAEGVRCAQAVLAIARAQSIEMPITEAVCGVLFDGIAPRDAVSGLLRRDARAE</sequence>
<name>GPDA_BURL3</name>
<comment type="function">
    <text evidence="1">Catalyzes the reduction of the glycolytic intermediate dihydroxyacetone phosphate (DHAP) to sn-glycerol 3-phosphate (G3P), the key precursor for phospholipid synthesis.</text>
</comment>
<comment type="catalytic activity">
    <reaction evidence="1">
        <text>sn-glycerol 3-phosphate + NAD(+) = dihydroxyacetone phosphate + NADH + H(+)</text>
        <dbReference type="Rhea" id="RHEA:11092"/>
        <dbReference type="ChEBI" id="CHEBI:15378"/>
        <dbReference type="ChEBI" id="CHEBI:57540"/>
        <dbReference type="ChEBI" id="CHEBI:57597"/>
        <dbReference type="ChEBI" id="CHEBI:57642"/>
        <dbReference type="ChEBI" id="CHEBI:57945"/>
        <dbReference type="EC" id="1.1.1.94"/>
    </reaction>
    <physiologicalReaction direction="right-to-left" evidence="1">
        <dbReference type="Rhea" id="RHEA:11094"/>
    </physiologicalReaction>
</comment>
<comment type="catalytic activity">
    <reaction evidence="1">
        <text>sn-glycerol 3-phosphate + NADP(+) = dihydroxyacetone phosphate + NADPH + H(+)</text>
        <dbReference type="Rhea" id="RHEA:11096"/>
        <dbReference type="ChEBI" id="CHEBI:15378"/>
        <dbReference type="ChEBI" id="CHEBI:57597"/>
        <dbReference type="ChEBI" id="CHEBI:57642"/>
        <dbReference type="ChEBI" id="CHEBI:57783"/>
        <dbReference type="ChEBI" id="CHEBI:58349"/>
        <dbReference type="EC" id="1.1.1.94"/>
    </reaction>
    <physiologicalReaction direction="right-to-left" evidence="1">
        <dbReference type="Rhea" id="RHEA:11098"/>
    </physiologicalReaction>
</comment>
<comment type="pathway">
    <text evidence="1">Membrane lipid metabolism; glycerophospholipid metabolism.</text>
</comment>
<comment type="subcellular location">
    <subcellularLocation>
        <location evidence="1">Cytoplasm</location>
    </subcellularLocation>
</comment>
<comment type="similarity">
    <text evidence="1">Belongs to the NAD-dependent glycerol-3-phosphate dehydrogenase family.</text>
</comment>
<accession>Q39CP0</accession>
<reference key="1">
    <citation type="submission" date="2005-10" db="EMBL/GenBank/DDBJ databases">
        <title>Complete sequence of chromosome 1 of Burkholderia sp. 383.</title>
        <authorList>
            <consortium name="US DOE Joint Genome Institute"/>
            <person name="Copeland A."/>
            <person name="Lucas S."/>
            <person name="Lapidus A."/>
            <person name="Barry K."/>
            <person name="Detter J.C."/>
            <person name="Glavina T."/>
            <person name="Hammon N."/>
            <person name="Israni S."/>
            <person name="Pitluck S."/>
            <person name="Chain P."/>
            <person name="Malfatti S."/>
            <person name="Shin M."/>
            <person name="Vergez L."/>
            <person name="Schmutz J."/>
            <person name="Larimer F."/>
            <person name="Land M."/>
            <person name="Kyrpides N."/>
            <person name="Lykidis A."/>
            <person name="Richardson P."/>
        </authorList>
    </citation>
    <scope>NUCLEOTIDE SEQUENCE [LARGE SCALE GENOMIC DNA]</scope>
    <source>
        <strain>ATCC 17760 / DSM 23089 / LMG 22485 / NCIMB 9086 / R18194 / 383</strain>
    </source>
</reference>
<evidence type="ECO:0000255" key="1">
    <source>
        <dbReference type="HAMAP-Rule" id="MF_00394"/>
    </source>
</evidence>
<dbReference type="EC" id="1.1.1.94" evidence="1"/>
<dbReference type="EMBL" id="CP000151">
    <property type="protein sequence ID" value="ABB09776.1"/>
    <property type="molecule type" value="Genomic_DNA"/>
</dbReference>
<dbReference type="RefSeq" id="WP_011353284.1">
    <property type="nucleotide sequence ID" value="NZ_CADFCT010000004.1"/>
</dbReference>
<dbReference type="SMR" id="Q39CP0"/>
<dbReference type="GeneID" id="45096063"/>
<dbReference type="KEGG" id="bur:Bcep18194_A6182"/>
<dbReference type="PATRIC" id="fig|482957.22.peg.3193"/>
<dbReference type="HOGENOM" id="CLU_033449_0_2_4"/>
<dbReference type="UniPathway" id="UPA00940"/>
<dbReference type="Proteomes" id="UP000002705">
    <property type="component" value="Chromosome 1"/>
</dbReference>
<dbReference type="GO" id="GO:0005829">
    <property type="term" value="C:cytosol"/>
    <property type="evidence" value="ECO:0007669"/>
    <property type="project" value="TreeGrafter"/>
</dbReference>
<dbReference type="GO" id="GO:0047952">
    <property type="term" value="F:glycerol-3-phosphate dehydrogenase [NAD(P)+] activity"/>
    <property type="evidence" value="ECO:0007669"/>
    <property type="project" value="UniProtKB-UniRule"/>
</dbReference>
<dbReference type="GO" id="GO:0051287">
    <property type="term" value="F:NAD binding"/>
    <property type="evidence" value="ECO:0007669"/>
    <property type="project" value="InterPro"/>
</dbReference>
<dbReference type="GO" id="GO:0005975">
    <property type="term" value="P:carbohydrate metabolic process"/>
    <property type="evidence" value="ECO:0007669"/>
    <property type="project" value="InterPro"/>
</dbReference>
<dbReference type="GO" id="GO:0046167">
    <property type="term" value="P:glycerol-3-phosphate biosynthetic process"/>
    <property type="evidence" value="ECO:0007669"/>
    <property type="project" value="UniProtKB-UniRule"/>
</dbReference>
<dbReference type="GO" id="GO:0046168">
    <property type="term" value="P:glycerol-3-phosphate catabolic process"/>
    <property type="evidence" value="ECO:0007669"/>
    <property type="project" value="InterPro"/>
</dbReference>
<dbReference type="GO" id="GO:0006650">
    <property type="term" value="P:glycerophospholipid metabolic process"/>
    <property type="evidence" value="ECO:0007669"/>
    <property type="project" value="UniProtKB-UniRule"/>
</dbReference>
<dbReference type="GO" id="GO:0008654">
    <property type="term" value="P:phospholipid biosynthetic process"/>
    <property type="evidence" value="ECO:0007669"/>
    <property type="project" value="UniProtKB-KW"/>
</dbReference>
<dbReference type="FunFam" id="1.10.1040.10:FF:000001">
    <property type="entry name" value="Glycerol-3-phosphate dehydrogenase [NAD(P)+]"/>
    <property type="match status" value="1"/>
</dbReference>
<dbReference type="FunFam" id="3.40.50.720:FF:000019">
    <property type="entry name" value="Glycerol-3-phosphate dehydrogenase [NAD(P)+]"/>
    <property type="match status" value="1"/>
</dbReference>
<dbReference type="Gene3D" id="1.10.1040.10">
    <property type="entry name" value="N-(1-d-carboxylethyl)-l-norvaline Dehydrogenase, domain 2"/>
    <property type="match status" value="1"/>
</dbReference>
<dbReference type="Gene3D" id="3.40.50.720">
    <property type="entry name" value="NAD(P)-binding Rossmann-like Domain"/>
    <property type="match status" value="1"/>
</dbReference>
<dbReference type="HAMAP" id="MF_00394">
    <property type="entry name" value="NAD_Glyc3P_dehydrog"/>
    <property type="match status" value="1"/>
</dbReference>
<dbReference type="InterPro" id="IPR008927">
    <property type="entry name" value="6-PGluconate_DH-like_C_sf"/>
</dbReference>
<dbReference type="InterPro" id="IPR013328">
    <property type="entry name" value="6PGD_dom2"/>
</dbReference>
<dbReference type="InterPro" id="IPR006168">
    <property type="entry name" value="G3P_DH_NAD-dep"/>
</dbReference>
<dbReference type="InterPro" id="IPR006109">
    <property type="entry name" value="G3P_DH_NAD-dep_C"/>
</dbReference>
<dbReference type="InterPro" id="IPR011128">
    <property type="entry name" value="G3P_DH_NAD-dep_N"/>
</dbReference>
<dbReference type="InterPro" id="IPR036291">
    <property type="entry name" value="NAD(P)-bd_dom_sf"/>
</dbReference>
<dbReference type="NCBIfam" id="NF000940">
    <property type="entry name" value="PRK00094.1-2"/>
    <property type="match status" value="1"/>
</dbReference>
<dbReference type="NCBIfam" id="NF000942">
    <property type="entry name" value="PRK00094.1-4"/>
    <property type="match status" value="1"/>
</dbReference>
<dbReference type="PANTHER" id="PTHR11728">
    <property type="entry name" value="GLYCEROL-3-PHOSPHATE DEHYDROGENASE"/>
    <property type="match status" value="1"/>
</dbReference>
<dbReference type="PANTHER" id="PTHR11728:SF1">
    <property type="entry name" value="GLYCEROL-3-PHOSPHATE DEHYDROGENASE [NAD(+)] 2, CHLOROPLASTIC"/>
    <property type="match status" value="1"/>
</dbReference>
<dbReference type="Pfam" id="PF07479">
    <property type="entry name" value="NAD_Gly3P_dh_C"/>
    <property type="match status" value="1"/>
</dbReference>
<dbReference type="Pfam" id="PF01210">
    <property type="entry name" value="NAD_Gly3P_dh_N"/>
    <property type="match status" value="1"/>
</dbReference>
<dbReference type="PIRSF" id="PIRSF000114">
    <property type="entry name" value="Glycerol-3-P_dh"/>
    <property type="match status" value="1"/>
</dbReference>
<dbReference type="PRINTS" id="PR00077">
    <property type="entry name" value="GPDHDRGNASE"/>
</dbReference>
<dbReference type="SUPFAM" id="SSF48179">
    <property type="entry name" value="6-phosphogluconate dehydrogenase C-terminal domain-like"/>
    <property type="match status" value="1"/>
</dbReference>
<dbReference type="SUPFAM" id="SSF51735">
    <property type="entry name" value="NAD(P)-binding Rossmann-fold domains"/>
    <property type="match status" value="1"/>
</dbReference>
<dbReference type="PROSITE" id="PS00957">
    <property type="entry name" value="NAD_G3PDH"/>
    <property type="match status" value="1"/>
</dbReference>
<feature type="chain" id="PRO_0000255290" description="Glycerol-3-phosphate dehydrogenase [NAD(P)+]">
    <location>
        <begin position="1"/>
        <end position="332"/>
    </location>
</feature>
<feature type="active site" description="Proton acceptor" evidence="1">
    <location>
        <position position="192"/>
    </location>
</feature>
<feature type="binding site" evidence="1">
    <location>
        <position position="11"/>
    </location>
    <ligand>
        <name>NADPH</name>
        <dbReference type="ChEBI" id="CHEBI:57783"/>
    </ligand>
</feature>
<feature type="binding site" evidence="1">
    <location>
        <position position="30"/>
    </location>
    <ligand>
        <name>NADPH</name>
        <dbReference type="ChEBI" id="CHEBI:57783"/>
    </ligand>
</feature>
<feature type="binding site" evidence="1">
    <location>
        <position position="108"/>
    </location>
    <ligand>
        <name>NADPH</name>
        <dbReference type="ChEBI" id="CHEBI:57783"/>
    </ligand>
</feature>
<feature type="binding site" evidence="1">
    <location>
        <position position="108"/>
    </location>
    <ligand>
        <name>sn-glycerol 3-phosphate</name>
        <dbReference type="ChEBI" id="CHEBI:57597"/>
    </ligand>
</feature>
<feature type="binding site" evidence="1">
    <location>
        <position position="137"/>
    </location>
    <ligand>
        <name>sn-glycerol 3-phosphate</name>
        <dbReference type="ChEBI" id="CHEBI:57597"/>
    </ligand>
</feature>
<feature type="binding site" evidence="1">
    <location>
        <position position="139"/>
    </location>
    <ligand>
        <name>sn-glycerol 3-phosphate</name>
        <dbReference type="ChEBI" id="CHEBI:57597"/>
    </ligand>
</feature>
<feature type="binding site" evidence="1">
    <location>
        <position position="141"/>
    </location>
    <ligand>
        <name>NADPH</name>
        <dbReference type="ChEBI" id="CHEBI:57783"/>
    </ligand>
</feature>
<feature type="binding site" evidence="1">
    <location>
        <position position="192"/>
    </location>
    <ligand>
        <name>sn-glycerol 3-phosphate</name>
        <dbReference type="ChEBI" id="CHEBI:57597"/>
    </ligand>
</feature>
<feature type="binding site" evidence="1">
    <location>
        <position position="245"/>
    </location>
    <ligand>
        <name>sn-glycerol 3-phosphate</name>
        <dbReference type="ChEBI" id="CHEBI:57597"/>
    </ligand>
</feature>
<feature type="binding site" evidence="1">
    <location>
        <position position="255"/>
    </location>
    <ligand>
        <name>sn-glycerol 3-phosphate</name>
        <dbReference type="ChEBI" id="CHEBI:57597"/>
    </ligand>
</feature>
<feature type="binding site" evidence="1">
    <location>
        <position position="256"/>
    </location>
    <ligand>
        <name>NADPH</name>
        <dbReference type="ChEBI" id="CHEBI:57783"/>
    </ligand>
</feature>
<feature type="binding site" evidence="1">
    <location>
        <position position="256"/>
    </location>
    <ligand>
        <name>sn-glycerol 3-phosphate</name>
        <dbReference type="ChEBI" id="CHEBI:57597"/>
    </ligand>
</feature>
<feature type="binding site" evidence="1">
    <location>
        <position position="257"/>
    </location>
    <ligand>
        <name>sn-glycerol 3-phosphate</name>
        <dbReference type="ChEBI" id="CHEBI:57597"/>
    </ligand>
</feature>
<feature type="binding site" evidence="1">
    <location>
        <position position="280"/>
    </location>
    <ligand>
        <name>NADPH</name>
        <dbReference type="ChEBI" id="CHEBI:57783"/>
    </ligand>
</feature>
<feature type="binding site" evidence="1">
    <location>
        <position position="282"/>
    </location>
    <ligand>
        <name>NADPH</name>
        <dbReference type="ChEBI" id="CHEBI:57783"/>
    </ligand>
</feature>
<organism>
    <name type="scientific">Burkholderia lata (strain ATCC 17760 / DSM 23089 / LMG 22485 / NCIMB 9086 / R18194 / 383)</name>
    <dbReference type="NCBI Taxonomy" id="482957"/>
    <lineage>
        <taxon>Bacteria</taxon>
        <taxon>Pseudomonadati</taxon>
        <taxon>Pseudomonadota</taxon>
        <taxon>Betaproteobacteria</taxon>
        <taxon>Burkholderiales</taxon>
        <taxon>Burkholderiaceae</taxon>
        <taxon>Burkholderia</taxon>
        <taxon>Burkholderia cepacia complex</taxon>
    </lineage>
</organism>
<keyword id="KW-0963">Cytoplasm</keyword>
<keyword id="KW-0444">Lipid biosynthesis</keyword>
<keyword id="KW-0443">Lipid metabolism</keyword>
<keyword id="KW-0520">NAD</keyword>
<keyword id="KW-0521">NADP</keyword>
<keyword id="KW-0547">Nucleotide-binding</keyword>
<keyword id="KW-0560">Oxidoreductase</keyword>
<keyword id="KW-0594">Phospholipid biosynthesis</keyword>
<keyword id="KW-1208">Phospholipid metabolism</keyword>
<proteinExistence type="inferred from homology"/>
<protein>
    <recommendedName>
        <fullName evidence="1">Glycerol-3-phosphate dehydrogenase [NAD(P)+]</fullName>
        <ecNumber evidence="1">1.1.1.94</ecNumber>
    </recommendedName>
    <alternativeName>
        <fullName evidence="1">NAD(P)(+)-dependent glycerol-3-phosphate dehydrogenase</fullName>
    </alternativeName>
    <alternativeName>
        <fullName evidence="1">NAD(P)H-dependent dihydroxyacetone-phosphate reductase</fullName>
    </alternativeName>
</protein>